<proteinExistence type="evidence at protein level"/>
<keyword id="KW-0002">3D-structure</keyword>
<keyword id="KW-0008">Acetylcholine receptor inhibiting toxin</keyword>
<keyword id="KW-0027">Amidation</keyword>
<keyword id="KW-0903">Direct protein sequencing</keyword>
<keyword id="KW-1015">Disulfide bond</keyword>
<keyword id="KW-0528">Neurotoxin</keyword>
<keyword id="KW-0629">Postsynaptic neurotoxin</keyword>
<keyword id="KW-0964">Secreted</keyword>
<keyword id="KW-0800">Toxin</keyword>
<dbReference type="PDB" id="6KN2">
    <property type="method" value="NMR"/>
    <property type="chains" value="A=1-10"/>
</dbReference>
<dbReference type="PDBsum" id="6KN2"/>
<dbReference type="SMR" id="P0DQM9"/>
<dbReference type="GO" id="GO:0005576">
    <property type="term" value="C:extracellular region"/>
    <property type="evidence" value="ECO:0007669"/>
    <property type="project" value="UniProtKB-SubCell"/>
</dbReference>
<dbReference type="GO" id="GO:0035792">
    <property type="term" value="C:host cell postsynaptic membrane"/>
    <property type="evidence" value="ECO:0007669"/>
    <property type="project" value="UniProtKB-KW"/>
</dbReference>
<dbReference type="GO" id="GO:0030550">
    <property type="term" value="F:acetylcholine receptor inhibitor activity"/>
    <property type="evidence" value="ECO:0007669"/>
    <property type="project" value="UniProtKB-KW"/>
</dbReference>
<dbReference type="GO" id="GO:0090729">
    <property type="term" value="F:toxin activity"/>
    <property type="evidence" value="ECO:0007669"/>
    <property type="project" value="UniProtKB-KW"/>
</dbReference>
<evidence type="ECO:0000269" key="1">
    <source>
    </source>
</evidence>
<evidence type="ECO:0000269" key="2">
    <source>
    </source>
</evidence>
<evidence type="ECO:0000303" key="3">
    <source>
    </source>
</evidence>
<evidence type="ECO:0000305" key="4"/>
<evidence type="ECO:0000305" key="5">
    <source>
    </source>
</evidence>
<evidence type="ECO:0007829" key="6">
    <source>
        <dbReference type="PDB" id="6KN2"/>
    </source>
</evidence>
<comment type="function">
    <text evidence="1">Inhibits the human alpha-3-beta-4/CHRNA3-CHRNB4 (IC(50)=15.7 uM) and alpha-7/CHRNA7 (IC(50)=77.2 uM) nicotinic acetylcholine receptor (nAChR) (PubMed:32234761). Incomplete inhibition of responses is observed for both subtypes, indicating a potential non-competitive mode of action (PubMed:32234761).</text>
</comment>
<comment type="subcellular location">
    <subcellularLocation>
        <location evidence="1">Secreted</location>
    </subcellularLocation>
</comment>
<comment type="tissue specificity">
    <text evidence="5">Expressed by the venom duct.</text>
</comment>
<comment type="domain">
    <text evidence="4">The cysteine framework is C-C.</text>
</comment>
<comment type="miscellaneous">
    <text evidence="1">Negative results: does not modulate oxytocin (OXTR), vasopressin (AVPR1A and AVPR1B), NMDA (GRIN1 and GRIN2A), and muscarinic (CHRM1 and CHRM3) receptors, and voltage-gated calcium (Cav) and sodium channels (Nav).</text>
</comment>
<comment type="miscellaneous">
    <text evidence="1">Exists in two forms, due to cis-trans isomerization at 4-Ser-Pro-5. The conformer with the trans conformation is the most abundant (~65:30). 6-Cys-Pro-7 and the 7-Pro-Pro-8 peptide bonds are in the cis conformation.</text>
</comment>
<reference key="1">
    <citation type="journal article" date="2020" name="J. Biol. Chem.">
        <title>Structure and allosteric activity of a single-disulfide conopeptide from Conus zonatus at human alpha3beta4 and alpha7 nicotinic acetylcholine receptors.</title>
        <authorList>
            <person name="Mohan M.K."/>
            <person name="Abraham N."/>
            <person name="Rajesh P.R."/>
            <person name="Jayaseelan B.F."/>
            <person name="Ragnarsson L."/>
            <person name="Lewis R.J."/>
            <person name="Sarma S.P."/>
        </authorList>
    </citation>
    <scope>PROTEIN SEQUENCE</scope>
    <scope>FUNCTION</scope>
    <scope>AMIDATION AT CYS-10</scope>
    <scope>MUTAGENESIS OF PRO-5 AND PRO-7</scope>
    <scope>STRUCTURE BY NMR</scope>
</reference>
<reference key="2">
    <citation type="journal article" date="2022" name="Mar. Drugs">
        <title>Single-disulfide conopeptide Czon1107, an allosteric antagonist of the human alpha3beta4 nicotinic acetylcholine receptor.</title>
        <authorList>
            <person name="Ma Y."/>
            <person name="Cao Q."/>
            <person name="Yang M."/>
            <person name="Gao Y."/>
            <person name="Fu S."/>
            <person name="Du W."/>
            <person name="Adams D.J."/>
            <person name="Jiang T."/>
            <person name="Tae H.S."/>
            <person name="Yu R."/>
        </authorList>
    </citation>
    <scope>STRUCTURE BY NMR</scope>
    <scope>FUNCTION</scope>
    <scope>SYNTHESIS</scope>
    <scope>MUTAGENESIS OF GLY-1; PHE-2; ARG-3; SER-4; PRO-5; PRO-7; PRO-8 AND PHE-9</scope>
    <scope>3D-STRUCTURE MODELING IN COMPLEX WITH ALPHA-3-BETA-4 NACHR</scope>
</reference>
<feature type="peptide" id="PRO_0000450818" description="Conotoxin Czon1107" evidence="1">
    <location>
        <begin position="1"/>
        <end position="10"/>
    </location>
</feature>
<feature type="modified residue" description="Cysteine amide" evidence="1">
    <location>
        <position position="10"/>
    </location>
</feature>
<feature type="disulfide bond" evidence="1">
    <location>
        <begin position="6"/>
        <end position="10"/>
    </location>
</feature>
<feature type="mutagenesis site" description="No change in inhibitory activity on human alpha-3-beta-4 nAChR." evidence="2">
    <original>G</original>
    <variation>A</variation>
    <location>
        <position position="1"/>
    </location>
</feature>
<feature type="mutagenesis site" description="Increase in inhibitory activity on human alpha-3-beta-4 nAChR." evidence="2">
    <original>G</original>
    <variation>R</variation>
    <location>
        <position position="1"/>
    </location>
</feature>
<feature type="mutagenesis site" description="Decrease in inhibitory activity on human alpha-3-beta-4 nAChR." evidence="2">
    <original>F</original>
    <variation>A</variation>
    <variation>R</variation>
    <location>
        <position position="2"/>
    </location>
</feature>
<feature type="mutagenesis site" description="Decrease in inhibitory activity on human alpha-3-beta-4 nAChR." evidence="2">
    <original>R</original>
    <variation>A</variation>
    <location>
        <position position="3"/>
    </location>
</feature>
<feature type="mutagenesis site" description="Decrease in inhibitory activity on human alpha-3-beta-4 nAChR." evidence="2">
    <original>S</original>
    <variation>A</variation>
    <variation>R</variation>
    <location>
        <position position="4"/>
    </location>
</feature>
<feature type="mutagenesis site" description="Increase in activity for alpha-7 and decrease in activity for alpha-3-beta-4. Exists only in cis conformation." evidence="1">
    <original>P</original>
    <variation>A</variation>
    <location>
        <position position="5"/>
    </location>
</feature>
<feature type="mutagenesis site" description="No change in inhibitory activity on human alpha-3-beta-4 nAChR." evidence="2">
    <original>P</original>
    <variation>R</variation>
    <location>
        <position position="5"/>
    </location>
</feature>
<feature type="mutagenesis site" description="Gain of selectivity for alpha-7 nAChR. Increase in activity for alpha-7 and important decrease in activity for alpha-3-beta-4. Exists in both cis and trans conformation." evidence="1">
    <original>P</original>
    <variation>A</variation>
    <location>
        <position position="7"/>
    </location>
</feature>
<feature type="mutagenesis site" description="Increase in inhibitory activity on human alpha-3-beta-4 nAChR." evidence="2">
    <original>P</original>
    <variation>R</variation>
    <location>
        <position position="7"/>
    </location>
</feature>
<feature type="mutagenesis site" description="No change in inhibitory activity on human alpha-3-beta-4 nAChR." evidence="2">
    <original>P</original>
    <variation>A</variation>
    <variation>R</variation>
    <location>
        <position position="8"/>
    </location>
</feature>
<feature type="mutagenesis site" description="Small decrease in inhibitory activity on human alpha-3-beta-4 nAChR." evidence="2">
    <original>F</original>
    <variation>A</variation>
    <variation>R</variation>
    <location>
        <position position="9"/>
    </location>
</feature>
<feature type="turn" evidence="6">
    <location>
        <begin position="6"/>
        <end position="8"/>
    </location>
</feature>
<protein>
    <recommendedName>
        <fullName evidence="3">Conotoxin Czon1107</fullName>
    </recommendedName>
</protein>
<name>CX07_CONZO</name>
<accession>P0DQM9</accession>
<organism>
    <name type="scientific">Conus zonatus</name>
    <name type="common">Zoned cone</name>
    <dbReference type="NCBI Taxonomy" id="754466"/>
    <lineage>
        <taxon>Eukaryota</taxon>
        <taxon>Metazoa</taxon>
        <taxon>Spiralia</taxon>
        <taxon>Lophotrochozoa</taxon>
        <taxon>Mollusca</taxon>
        <taxon>Gastropoda</taxon>
        <taxon>Caenogastropoda</taxon>
        <taxon>Neogastropoda</taxon>
        <taxon>Conoidea</taxon>
        <taxon>Conidae</taxon>
        <taxon>Conus</taxon>
        <taxon>Stephanoconus</taxon>
    </lineage>
</organism>
<sequence>GFRSPCPPFC</sequence>